<accession>Q50255</accession>
<gene>
    <name evidence="1" type="primary">groEL</name>
    <name evidence="1" type="synonym">groL</name>
    <name type="synonym">mopA</name>
</gene>
<feature type="chain" id="PRO_0000063440" description="Chaperonin GroEL">
    <location>
        <begin position="1" status="less than"/>
        <end position="120" status="greater than"/>
    </location>
</feature>
<feature type="binding site" evidence="1">
    <location>
        <begin position="23"/>
        <end position="27"/>
    </location>
    <ligand>
        <name>ATP</name>
        <dbReference type="ChEBI" id="CHEBI:30616"/>
    </ligand>
</feature>
<feature type="non-terminal residue">
    <location>
        <position position="1"/>
    </location>
</feature>
<feature type="non-terminal residue">
    <location>
        <position position="120"/>
    </location>
</feature>
<name>CH60_MYCNO</name>
<proteinExistence type="inferred from homology"/>
<protein>
    <recommendedName>
        <fullName evidence="1">Chaperonin GroEL</fullName>
        <ecNumber evidence="1">5.6.1.7</ecNumber>
    </recommendedName>
    <alternativeName>
        <fullName evidence="1">60 kDa chaperonin</fullName>
    </alternativeName>
    <alternativeName>
        <fullName>65 kDa heat shock protein</fullName>
    </alternativeName>
    <alternativeName>
        <fullName evidence="1">Chaperonin-60</fullName>
        <shortName evidence="1">Cpn60</shortName>
    </alternativeName>
</protein>
<reference key="1">
    <citation type="journal article" date="1995" name="Arch. Pathol. Lab. Med.">
        <title>Rapid Mycobacterium species assignment and unambiguous identification of mutations associated with antimicrobial resistance in Mycobacterium tuberculosis by automated DNA sequencing.</title>
        <authorList>
            <person name="Kapur V."/>
            <person name="Li L.L."/>
            <person name="Hamrick M.R."/>
            <person name="Plikaytis B.B."/>
            <person name="Shinnick T.M."/>
            <person name="Telenti A."/>
            <person name="Jacobs W.R. Jr."/>
            <person name="Banerjee A."/>
            <person name="Cole S."/>
            <person name="Yuen K.Y."/>
            <person name="Clarridge J.E."/>
            <person name="Kreiswirth B.N."/>
            <person name="Musser J.M."/>
        </authorList>
    </citation>
    <scope>NUCLEOTIDE SEQUENCE [GENOMIC DNA]</scope>
    <source>
        <strain>1483</strain>
    </source>
</reference>
<sequence>PYEKIGAELVKEVAKKTDDVAGDGTTTATVLAQALVKEGLRNVAAGANPLGLKRGIEKAVEKITEGLLATAKEVETKEQIAATAGISAGDQTIGDLIAEAMDKVGNEGVITVEESNTFGL</sequence>
<comment type="function">
    <text evidence="1">Together with its co-chaperonin GroES, plays an essential role in assisting protein folding. The GroEL-GroES system forms a nano-cage that allows encapsulation of the non-native substrate proteins and provides a physical environment optimized to promote and accelerate protein folding.</text>
</comment>
<comment type="catalytic activity">
    <reaction evidence="1">
        <text>ATP + H2O + a folded polypeptide = ADP + phosphate + an unfolded polypeptide.</text>
        <dbReference type="EC" id="5.6.1.7"/>
    </reaction>
</comment>
<comment type="subunit">
    <text evidence="1">Forms a cylinder of 14 subunits composed of two heptameric rings stacked back-to-back. Interacts with the co-chaperonin GroES.</text>
</comment>
<comment type="subcellular location">
    <subcellularLocation>
        <location evidence="1">Cytoplasm</location>
    </subcellularLocation>
</comment>
<comment type="similarity">
    <text evidence="1 2">Belongs to the chaperonin (HSP60) family.</text>
</comment>
<organism>
    <name type="scientific">Mycolicibacter nonchromogenicus</name>
    <name type="common">Mycobacterium nonchromogenicum</name>
    <dbReference type="NCBI Taxonomy" id="1782"/>
    <lineage>
        <taxon>Bacteria</taxon>
        <taxon>Bacillati</taxon>
        <taxon>Actinomycetota</taxon>
        <taxon>Actinomycetes</taxon>
        <taxon>Mycobacteriales</taxon>
        <taxon>Mycobacteriaceae</taxon>
        <taxon>Mycolicibacter</taxon>
    </lineage>
</organism>
<keyword id="KW-0067">ATP-binding</keyword>
<keyword id="KW-0143">Chaperone</keyword>
<keyword id="KW-0963">Cytoplasm</keyword>
<keyword id="KW-0413">Isomerase</keyword>
<keyword id="KW-0547">Nucleotide-binding</keyword>
<keyword id="KW-0346">Stress response</keyword>
<dbReference type="EC" id="5.6.1.7" evidence="1"/>
<dbReference type="EMBL" id="U17951">
    <property type="protein sequence ID" value="AAB39070.1"/>
    <property type="molecule type" value="Genomic_DNA"/>
</dbReference>
<dbReference type="SMR" id="Q50255"/>
<dbReference type="STRING" id="1782.AWC18_06175"/>
<dbReference type="GO" id="GO:0005737">
    <property type="term" value="C:cytoplasm"/>
    <property type="evidence" value="ECO:0007669"/>
    <property type="project" value="UniProtKB-SubCell"/>
</dbReference>
<dbReference type="GO" id="GO:0005524">
    <property type="term" value="F:ATP binding"/>
    <property type="evidence" value="ECO:0007669"/>
    <property type="project" value="UniProtKB-KW"/>
</dbReference>
<dbReference type="GO" id="GO:0140662">
    <property type="term" value="F:ATP-dependent protein folding chaperone"/>
    <property type="evidence" value="ECO:0007669"/>
    <property type="project" value="InterPro"/>
</dbReference>
<dbReference type="GO" id="GO:0016853">
    <property type="term" value="F:isomerase activity"/>
    <property type="evidence" value="ECO:0007669"/>
    <property type="project" value="UniProtKB-KW"/>
</dbReference>
<dbReference type="GO" id="GO:0042026">
    <property type="term" value="P:protein refolding"/>
    <property type="evidence" value="ECO:0007669"/>
    <property type="project" value="InterPro"/>
</dbReference>
<dbReference type="Gene3D" id="1.10.560.10">
    <property type="entry name" value="GroEL-like equatorial domain"/>
    <property type="match status" value="1"/>
</dbReference>
<dbReference type="Gene3D" id="3.30.260.10">
    <property type="entry name" value="TCP-1-like chaperonin intermediate domain"/>
    <property type="match status" value="1"/>
</dbReference>
<dbReference type="InterPro" id="IPR001844">
    <property type="entry name" value="Cpn60/GroEL"/>
</dbReference>
<dbReference type="InterPro" id="IPR002423">
    <property type="entry name" value="Cpn60/GroEL/TCP-1"/>
</dbReference>
<dbReference type="InterPro" id="IPR027413">
    <property type="entry name" value="GROEL-like_equatorial_sf"/>
</dbReference>
<dbReference type="InterPro" id="IPR027410">
    <property type="entry name" value="TCP-1-like_intermed_sf"/>
</dbReference>
<dbReference type="PANTHER" id="PTHR45633">
    <property type="entry name" value="60 KDA HEAT SHOCK PROTEIN, MITOCHONDRIAL"/>
    <property type="match status" value="1"/>
</dbReference>
<dbReference type="Pfam" id="PF00118">
    <property type="entry name" value="Cpn60_TCP1"/>
    <property type="match status" value="1"/>
</dbReference>
<dbReference type="SUPFAM" id="SSF48592">
    <property type="entry name" value="GroEL equatorial domain-like"/>
    <property type="match status" value="1"/>
</dbReference>
<evidence type="ECO:0000255" key="1">
    <source>
        <dbReference type="HAMAP-Rule" id="MF_00600"/>
    </source>
</evidence>
<evidence type="ECO:0000305" key="2"/>